<organism>
    <name type="scientific">Methanocaldococcus jannaschii (strain ATCC 43067 / DSM 2661 / JAL-1 / JCM 10045 / NBRC 100440)</name>
    <name type="common">Methanococcus jannaschii</name>
    <dbReference type="NCBI Taxonomy" id="243232"/>
    <lineage>
        <taxon>Archaea</taxon>
        <taxon>Methanobacteriati</taxon>
        <taxon>Methanobacteriota</taxon>
        <taxon>Methanomada group</taxon>
        <taxon>Methanococci</taxon>
        <taxon>Methanococcales</taxon>
        <taxon>Methanocaldococcaceae</taxon>
        <taxon>Methanocaldococcus</taxon>
    </lineage>
</organism>
<accession>Q58968</accession>
<reference key="1">
    <citation type="journal article" date="1996" name="Science">
        <title>Complete genome sequence of the methanogenic archaeon, Methanococcus jannaschii.</title>
        <authorList>
            <person name="Bult C.J."/>
            <person name="White O."/>
            <person name="Olsen G.J."/>
            <person name="Zhou L."/>
            <person name="Fleischmann R.D."/>
            <person name="Sutton G.G."/>
            <person name="Blake J.A."/>
            <person name="FitzGerald L.M."/>
            <person name="Clayton R.A."/>
            <person name="Gocayne J.D."/>
            <person name="Kerlavage A.R."/>
            <person name="Dougherty B.A."/>
            <person name="Tomb J.-F."/>
            <person name="Adams M.D."/>
            <person name="Reich C.I."/>
            <person name="Overbeek R."/>
            <person name="Kirkness E.F."/>
            <person name="Weinstock K.G."/>
            <person name="Merrick J.M."/>
            <person name="Glodek A."/>
            <person name="Scott J.L."/>
            <person name="Geoghagen N.S.M."/>
            <person name="Weidman J.F."/>
            <person name="Fuhrmann J.L."/>
            <person name="Nguyen D."/>
            <person name="Utterback T.R."/>
            <person name="Kelley J.M."/>
            <person name="Peterson J.D."/>
            <person name="Sadow P.W."/>
            <person name="Hanna M.C."/>
            <person name="Cotton M.D."/>
            <person name="Roberts K.M."/>
            <person name="Hurst M.A."/>
            <person name="Kaine B.P."/>
            <person name="Borodovsky M."/>
            <person name="Klenk H.-P."/>
            <person name="Fraser C.M."/>
            <person name="Smith H.O."/>
            <person name="Woese C.R."/>
            <person name="Venter J.C."/>
        </authorList>
    </citation>
    <scope>NUCLEOTIDE SEQUENCE [LARGE SCALE GENOMIC DNA]</scope>
    <source>
        <strain>ATCC 43067 / DSM 2661 / JAL-1 / JCM 10045 / NBRC 100440</strain>
    </source>
</reference>
<proteinExistence type="predicted"/>
<feature type="chain" id="PRO_0000107421" description="Uncharacterized protein MJ1573">
    <location>
        <begin position="1"/>
        <end position="61"/>
    </location>
</feature>
<name>Y1573_METJA</name>
<gene>
    <name type="ordered locus">MJ1573</name>
</gene>
<dbReference type="EMBL" id="L77117">
    <property type="protein sequence ID" value="AAB99595.1"/>
    <property type="molecule type" value="Genomic_DNA"/>
</dbReference>
<dbReference type="PIR" id="D64496">
    <property type="entry name" value="D64496"/>
</dbReference>
<dbReference type="STRING" id="243232.MJ_1573"/>
<dbReference type="PaxDb" id="243232-MJ_1573"/>
<dbReference type="EnsemblBacteria" id="AAB99595">
    <property type="protein sequence ID" value="AAB99595"/>
    <property type="gene ID" value="MJ_1573"/>
</dbReference>
<dbReference type="KEGG" id="mja:MJ_1573"/>
<dbReference type="HOGENOM" id="CLU_2911527_0_0_2"/>
<dbReference type="InParanoid" id="Q58968"/>
<dbReference type="Proteomes" id="UP000000805">
    <property type="component" value="Chromosome"/>
</dbReference>
<protein>
    <recommendedName>
        <fullName>Uncharacterized protein MJ1573</fullName>
    </recommendedName>
</protein>
<sequence length="61" mass="7298">MVMLFPDYIRDVNQMKSSLSFLDKIEEDDLAISIYRDRKLSRKELFPIYLGATTHLHKECY</sequence>
<keyword id="KW-1185">Reference proteome</keyword>